<evidence type="ECO:0000255" key="1">
    <source>
        <dbReference type="PROSITE-ProRule" id="PRU00148"/>
    </source>
</evidence>
<evidence type="ECO:0000256" key="2">
    <source>
        <dbReference type="SAM" id="MobiDB-lite"/>
    </source>
</evidence>
<evidence type="ECO:0000269" key="3">
    <source>
    </source>
</evidence>
<evidence type="ECO:0000269" key="4">
    <source>
    </source>
</evidence>
<evidence type="ECO:0000269" key="5">
    <source>
    </source>
</evidence>
<evidence type="ECO:0000269" key="6">
    <source>
    </source>
</evidence>
<evidence type="ECO:0000269" key="7">
    <source>
    </source>
</evidence>
<evidence type="ECO:0000269" key="8">
    <source>
    </source>
</evidence>
<evidence type="ECO:0000305" key="9"/>
<evidence type="ECO:0000312" key="10">
    <source>
        <dbReference type="WormBase" id="F56D2.7"/>
    </source>
</evidence>
<accession>O76337</accession>
<accession>O01421</accession>
<feature type="chain" id="PRO_0000296683" description="Cell death protein 6">
    <location>
        <begin position="1"/>
        <end position="492"/>
    </location>
</feature>
<feature type="domain" description="PID" evidence="1">
    <location>
        <begin position="55"/>
        <end position="215"/>
    </location>
</feature>
<feature type="region of interest" description="Disordered" evidence="2">
    <location>
        <begin position="19"/>
        <end position="38"/>
    </location>
</feature>
<feature type="region of interest" description="Disordered" evidence="2">
    <location>
        <begin position="241"/>
        <end position="385"/>
    </location>
</feature>
<feature type="region of interest" description="Disordered" evidence="2">
    <location>
        <begin position="464"/>
        <end position="492"/>
    </location>
</feature>
<feature type="compositionally biased region" description="Low complexity" evidence="2">
    <location>
        <begin position="19"/>
        <end position="29"/>
    </location>
</feature>
<feature type="compositionally biased region" description="Pro residues" evidence="2">
    <location>
        <begin position="244"/>
        <end position="268"/>
    </location>
</feature>
<feature type="compositionally biased region" description="Low complexity" evidence="2">
    <location>
        <begin position="300"/>
        <end position="312"/>
    </location>
</feature>
<feature type="compositionally biased region" description="Pro residues" evidence="2">
    <location>
        <begin position="313"/>
        <end position="333"/>
    </location>
</feature>
<feature type="compositionally biased region" description="Basic and acidic residues" evidence="2">
    <location>
        <begin position="373"/>
        <end position="383"/>
    </location>
</feature>
<feature type="mutagenesis site" description="Loss of dimerization; when associated with P-215." evidence="3">
    <original>L</original>
    <variation>P</variation>
    <location>
        <position position="208"/>
    </location>
</feature>
<feature type="mutagenesis site" description="Loss of dimerization; when associated with P-208." evidence="3">
    <original>L</original>
    <variation>P</variation>
    <location>
        <position position="215"/>
    </location>
</feature>
<organism>
    <name type="scientific">Caenorhabditis elegans</name>
    <dbReference type="NCBI Taxonomy" id="6239"/>
    <lineage>
        <taxon>Eukaryota</taxon>
        <taxon>Metazoa</taxon>
        <taxon>Ecdysozoa</taxon>
        <taxon>Nematoda</taxon>
        <taxon>Chromadorea</taxon>
        <taxon>Rhabditida</taxon>
        <taxon>Rhabditina</taxon>
        <taxon>Rhabditomorpha</taxon>
        <taxon>Rhabditoidea</taxon>
        <taxon>Rhabditidae</taxon>
        <taxon>Peloderinae</taxon>
        <taxon>Caenorhabditis</taxon>
    </lineage>
</organism>
<sequence>MAKDIYKTFKRSVSGIVGGNNINGEGSSSPSTSAPQVKYRGGTGRTWIHPPDYLINGHVEYVARFLGCVETPKANGSDVAREAIHAIRFQRDLKRSEQTRETAKLQKVEIRISIDNVIIADIKTKAPMYTFPLGRISFCADDKDDKRMFSFIARAEGASGKPSCYAFTSEKLAEDITLTIGEAFDLAYKRFLDKNRTSLENQKQIYILKKKIVELETENQVLIERLAEALRANSKADYENTGPPIYPGLGPPALPLSPMPQGPPPNIPPSSIYSMPRANDLPPTEMAPTLPQISTSSNGASPSVSPASTSPSGPAPSIPPPRPPALAPPPPVAPRRNPVVSPKNSTAGLLDGLELGSAEPAKKAPSNIFDDSFDPRAGEKKSTAAEYNPFGADFLSGIQNGKEAPPSASAELLASEAIARLPKPESSSVPPKKTAAEYDAMINEVEKKLAAMSSGSFEFGQLQTGDLGGIEGESDYGTPSDRLNPKMMNLKQ</sequence>
<comment type="function">
    <text evidence="5 6 7 8">May function as an adapter protein in a pathway that mediates recognition and phagocytosis of apoptotic cells during normal development. Promotes engulfment of cells at both early and late stages of apoptosis. Required for actin reorganization around apoptotic cells. Plays a role in protecting dopaminergic neurons from oxidative stress-induced degeneration (PubMed:29346382). Mediates recruitment of E3 ubiquitin-protein ligase trim-21 to the apoptotic cell surface which promotes ubiquitination and degradation of ced-1 (PubMed:35929733).</text>
</comment>
<comment type="subunit">
    <text evidence="3 4 7">Homodimer (PubMed:10734103). Interacts with ced-1 (PubMed:11729193, PubMed:35929733). Interacts with E3 ubiquitin-protein ligase trim-21 (PubMed:35929733).</text>
</comment>
<comment type="subcellular location">
    <subcellularLocation>
        <location evidence="5">Cytoplasm</location>
    </subcellularLocation>
</comment>
<comment type="tissue specificity">
    <text evidence="8">Detected in gonadal sheath cells.</text>
</comment>
<comment type="domain">
    <text evidence="7">The PTB domain is required for interaction with trim-21.</text>
</comment>
<comment type="similarity">
    <text evidence="9">Belongs to the ced-6 family.</text>
</comment>
<gene>
    <name evidence="10" type="primary">ced-6</name>
    <name evidence="10" type="ORF">F56D2.7</name>
</gene>
<proteinExistence type="evidence at protein level"/>
<reference key="1">
    <citation type="journal article" date="1998" name="Cell">
        <title>Candidate adaptor protein CED-6 promotes the engulfment of apoptotic cells in C. elegans.</title>
        <authorList>
            <person name="Liu Q.A."/>
            <person name="Hengartner M.O."/>
        </authorList>
    </citation>
    <scope>NUCLEOTIDE SEQUENCE [MRNA]</scope>
    <scope>FUNCTION</scope>
    <scope>TISSUE SPECIFICITY</scope>
</reference>
<reference key="2">
    <citation type="journal article" date="1998" name="Science">
        <title>Genome sequence of the nematode C. elegans: a platform for investigating biology.</title>
        <authorList>
            <consortium name="The C. elegans sequencing consortium"/>
        </authorList>
    </citation>
    <scope>NUCLEOTIDE SEQUENCE [LARGE SCALE GENOMIC DNA]</scope>
    <source>
        <strain>Bristol N2</strain>
    </source>
</reference>
<reference key="3">
    <citation type="journal article" date="2000" name="J. Biol. Chem.">
        <title>Identification and characterization of a dimerization domain in CED-6, an adapter protein involved in engulfment of apoptotic cells.</title>
        <authorList>
            <person name="Su H.P."/>
            <person name="Brugnera E."/>
            <person name="Van Criekinge W."/>
            <person name="Smits E."/>
            <person name="Hengartner M."/>
            <person name="Bogaert T."/>
            <person name="Ravichandran K.S."/>
        </authorList>
    </citation>
    <scope>SUBUNIT</scope>
    <scope>MUTAGENESIS OF LEU-208 AND LEU-215</scope>
</reference>
<reference key="4">
    <citation type="journal article" date="2002" name="J. Biol. Chem.">
        <title>Interaction of CED-6/GULP, an adapter protein involved in engulfment of apoptotic cells with CED-1 and CD91/low density lipoprotein receptor-related protein (LRP).</title>
        <authorList>
            <person name="Su H.P."/>
            <person name="Nakada-Tsukui K."/>
            <person name="Tosello-Trampont A.-C."/>
            <person name="Li Y."/>
            <person name="Bu G."/>
            <person name="Henson P.M."/>
            <person name="Ravichandran K.S."/>
        </authorList>
    </citation>
    <scope>INTERACTION WITH CED-1</scope>
</reference>
<reference key="5">
    <citation type="journal article" date="2005" name="Nature">
        <title>Two pathways converge at CED-10 to mediate actin rearrangement and corpse removal in C. elegans.</title>
        <authorList>
            <person name="Kinchen J.M."/>
            <person name="Cabello J."/>
            <person name="Klingele D."/>
            <person name="Wong K."/>
            <person name="Feichtinger R."/>
            <person name="Schnabel H."/>
            <person name="Schnabel R."/>
            <person name="Hengartner M.O."/>
        </authorList>
    </citation>
    <scope>FUNCTION</scope>
    <scope>SUBCELLULAR LOCATION</scope>
</reference>
<reference key="6">
    <citation type="journal article" date="2018" name="PLoS Genet.">
        <title>6-OHDA-induced dopaminergic neurodegeneration in Caenorhabditis elegans is promoted by the engulfment pathway and inhibited by the transthyretin-related protein TTR-33.</title>
        <authorList>
            <person name="Offenburger S.L."/>
            <person name="Ho X.Y."/>
            <person name="Tachie-Menson T."/>
            <person name="Coakley S."/>
            <person name="Hilliard M.A."/>
            <person name="Gartner A."/>
        </authorList>
    </citation>
    <scope>FUNCTION</scope>
</reference>
<reference evidence="9" key="7">
    <citation type="journal article" date="2022" name="Elife">
        <title>trim-21 promotes proteasomal degradation of CED-1 for apoptotic cell clearance in C. elegans.</title>
        <authorList>
            <person name="Yuan L."/>
            <person name="Li P."/>
            <person name="Jing H."/>
            <person name="Zheng Q."/>
            <person name="Xiao H."/>
        </authorList>
    </citation>
    <scope>FUNCTION</scope>
    <scope>INTERACTION WITH TRIM-21 AND CED-1</scope>
    <scope>DOMAIN</scope>
</reference>
<protein>
    <recommendedName>
        <fullName>Cell death protein 6</fullName>
    </recommendedName>
    <alternativeName>
        <fullName>Candidate adapter protein ced-6</fullName>
    </alternativeName>
</protein>
<dbReference type="EMBL" id="AF061513">
    <property type="protein sequence ID" value="AAC24362.1"/>
    <property type="molecule type" value="mRNA"/>
</dbReference>
<dbReference type="EMBL" id="BX284603">
    <property type="protein sequence ID" value="CCD63140.1"/>
    <property type="molecule type" value="Genomic_DNA"/>
</dbReference>
<dbReference type="PIR" id="T16484">
    <property type="entry name" value="T16484"/>
</dbReference>
<dbReference type="PIR" id="T43064">
    <property type="entry name" value="T43064"/>
</dbReference>
<dbReference type="RefSeq" id="NP_498203.2">
    <property type="nucleotide sequence ID" value="NM_065802.8"/>
</dbReference>
<dbReference type="SMR" id="O76337"/>
<dbReference type="BioGRID" id="41002">
    <property type="interactions" value="11"/>
</dbReference>
<dbReference type="ELM" id="O76337"/>
<dbReference type="FunCoup" id="O76337">
    <property type="interactions" value="71"/>
</dbReference>
<dbReference type="IntAct" id="O76337">
    <property type="interactions" value="4"/>
</dbReference>
<dbReference type="MINT" id="O76337"/>
<dbReference type="STRING" id="6239.F56D2.7.1"/>
<dbReference type="iPTMnet" id="O76337"/>
<dbReference type="PaxDb" id="6239-F56D2.7"/>
<dbReference type="PeptideAtlas" id="O76337"/>
<dbReference type="EnsemblMetazoa" id="F56D2.7.1">
    <property type="protein sequence ID" value="F56D2.7.1"/>
    <property type="gene ID" value="WBGene00000420"/>
</dbReference>
<dbReference type="GeneID" id="175773"/>
<dbReference type="KEGG" id="cel:CELE_F56D2.7"/>
<dbReference type="UCSC" id="F56D2.7">
    <property type="organism name" value="c. elegans"/>
</dbReference>
<dbReference type="AGR" id="WB:WBGene00000420"/>
<dbReference type="CTD" id="35971"/>
<dbReference type="WormBase" id="F56D2.7">
    <property type="protein sequence ID" value="CE33657"/>
    <property type="gene ID" value="WBGene00000420"/>
    <property type="gene designation" value="ced-6"/>
</dbReference>
<dbReference type="eggNOG" id="KOG3536">
    <property type="taxonomic scope" value="Eukaryota"/>
</dbReference>
<dbReference type="GeneTree" id="ENSGT00940000156186"/>
<dbReference type="HOGENOM" id="CLU_539941_0_0_1"/>
<dbReference type="InParanoid" id="O76337"/>
<dbReference type="OMA" id="HAIRFQL"/>
<dbReference type="OrthoDB" id="10057585at2759"/>
<dbReference type="SignaLink" id="O76337"/>
<dbReference type="PRO" id="PR:O76337"/>
<dbReference type="Proteomes" id="UP000001940">
    <property type="component" value="Chromosome III"/>
</dbReference>
<dbReference type="Bgee" id="WBGene00000420">
    <property type="expression patterns" value="Expressed in germ line (C elegans) and 4 other cell types or tissues"/>
</dbReference>
<dbReference type="GO" id="GO:0009898">
    <property type="term" value="C:cytoplasmic side of plasma membrane"/>
    <property type="evidence" value="ECO:0000314"/>
    <property type="project" value="WormBase"/>
</dbReference>
<dbReference type="GO" id="GO:0045335">
    <property type="term" value="C:phagocytic vesicle"/>
    <property type="evidence" value="ECO:0000314"/>
    <property type="project" value="WormBase"/>
</dbReference>
<dbReference type="GO" id="GO:0035615">
    <property type="term" value="F:clathrin adaptor activity"/>
    <property type="evidence" value="ECO:0000353"/>
    <property type="project" value="WormBase"/>
</dbReference>
<dbReference type="GO" id="GO:0005124">
    <property type="term" value="F:scavenger receptor binding"/>
    <property type="evidence" value="ECO:0000353"/>
    <property type="project" value="WormBase"/>
</dbReference>
<dbReference type="GO" id="GO:1902742">
    <property type="term" value="P:apoptotic process involved in development"/>
    <property type="evidence" value="ECO:0000315"/>
    <property type="project" value="UniProtKB"/>
</dbReference>
<dbReference type="GO" id="GO:0043652">
    <property type="term" value="P:engulfment of apoptotic cell"/>
    <property type="evidence" value="ECO:0000315"/>
    <property type="project" value="WormBase"/>
</dbReference>
<dbReference type="GO" id="GO:0000132">
    <property type="term" value="P:establishment of mitotic spindle orientation"/>
    <property type="evidence" value="ECO:0000316"/>
    <property type="project" value="UniProtKB"/>
</dbReference>
<dbReference type="GO" id="GO:0070986">
    <property type="term" value="P:left/right axis specification"/>
    <property type="evidence" value="ECO:0000316"/>
    <property type="project" value="UniProtKB"/>
</dbReference>
<dbReference type="GO" id="GO:1904747">
    <property type="term" value="P:positive regulation of apoptotic process involved in development"/>
    <property type="evidence" value="ECO:0000315"/>
    <property type="project" value="UniProtKB"/>
</dbReference>
<dbReference type="GO" id="GO:1903356">
    <property type="term" value="P:positive regulation of distal tip cell migration"/>
    <property type="evidence" value="ECO:0000316"/>
    <property type="project" value="UniProtKB"/>
</dbReference>
<dbReference type="GO" id="GO:1901076">
    <property type="term" value="P:positive regulation of engulfment of apoptotic cell"/>
    <property type="evidence" value="ECO:0000315"/>
    <property type="project" value="UniProtKB"/>
</dbReference>
<dbReference type="GO" id="GO:0012501">
    <property type="term" value="P:programmed cell death"/>
    <property type="evidence" value="ECO:0000315"/>
    <property type="project" value="WormBase"/>
</dbReference>
<dbReference type="CDD" id="cd01273">
    <property type="entry name" value="PTB_CED-6"/>
    <property type="match status" value="1"/>
</dbReference>
<dbReference type="FunFam" id="2.30.29.30:FF:000118">
    <property type="entry name" value="GULP PTB domain containing engulfment adaptor 1"/>
    <property type="match status" value="1"/>
</dbReference>
<dbReference type="Gene3D" id="2.30.29.30">
    <property type="entry name" value="Pleckstrin-homology domain (PH domain)/Phosphotyrosine-binding domain (PTB)"/>
    <property type="match status" value="1"/>
</dbReference>
<dbReference type="InterPro" id="IPR051133">
    <property type="entry name" value="Adapter_Engulfment-Domain"/>
</dbReference>
<dbReference type="InterPro" id="IPR011993">
    <property type="entry name" value="PH-like_dom_sf"/>
</dbReference>
<dbReference type="InterPro" id="IPR006020">
    <property type="entry name" value="PTB/PI_dom"/>
</dbReference>
<dbReference type="PANTHER" id="PTHR11232:SF77">
    <property type="entry name" value="GULP PTB DOMAIN CONTAINING ENGULFMENT ADAPTOR 1"/>
    <property type="match status" value="1"/>
</dbReference>
<dbReference type="PANTHER" id="PTHR11232">
    <property type="entry name" value="PHOSPHOTYROSINE INTERACTION DOMAIN-CONTAINING FAMILY MEMBER"/>
    <property type="match status" value="1"/>
</dbReference>
<dbReference type="Pfam" id="PF00640">
    <property type="entry name" value="PID"/>
    <property type="match status" value="1"/>
</dbReference>
<dbReference type="SMART" id="SM00462">
    <property type="entry name" value="PTB"/>
    <property type="match status" value="1"/>
</dbReference>
<dbReference type="SUPFAM" id="SSF50729">
    <property type="entry name" value="PH domain-like"/>
    <property type="match status" value="1"/>
</dbReference>
<dbReference type="PROSITE" id="PS01179">
    <property type="entry name" value="PID"/>
    <property type="match status" value="1"/>
</dbReference>
<keyword id="KW-0053">Apoptosis</keyword>
<keyword id="KW-0963">Cytoplasm</keyword>
<keyword id="KW-0217">Developmental protein</keyword>
<keyword id="KW-0581">Phagocytosis</keyword>
<keyword id="KW-1185">Reference proteome</keyword>
<name>CED6_CAEEL</name>